<accession>B5FNU2</accession>
<gene>
    <name evidence="1" type="primary">cyaY</name>
    <name type="ordered locus">SeD_A4329</name>
</gene>
<organism>
    <name type="scientific">Salmonella dublin (strain CT_02021853)</name>
    <dbReference type="NCBI Taxonomy" id="439851"/>
    <lineage>
        <taxon>Bacteria</taxon>
        <taxon>Pseudomonadati</taxon>
        <taxon>Pseudomonadota</taxon>
        <taxon>Gammaproteobacteria</taxon>
        <taxon>Enterobacterales</taxon>
        <taxon>Enterobacteriaceae</taxon>
        <taxon>Salmonella</taxon>
    </lineage>
</organism>
<comment type="function">
    <text evidence="1">Involved in iron-sulfur (Fe-S) cluster assembly. May act as a regulator of Fe-S biogenesis.</text>
</comment>
<comment type="similarity">
    <text evidence="1">Belongs to the frataxin family.</text>
</comment>
<proteinExistence type="inferred from homology"/>
<name>CYAY_SALDC</name>
<feature type="chain" id="PRO_1000096252" description="Iron-sulfur cluster assembly protein CyaY">
    <location>
        <begin position="1"/>
        <end position="106"/>
    </location>
</feature>
<protein>
    <recommendedName>
        <fullName evidence="1">Iron-sulfur cluster assembly protein CyaY</fullName>
    </recommendedName>
</protein>
<sequence length="106" mass="12172">MNDSEFHRLADALWLTIEERLDNWDGDSDIDCEINGGVLTLSFENGSKIIINRQEPLHQVWLATKQGGYHFDLKGDEWVCDRSGETFWDLLEQAATQQAGEKVSFR</sequence>
<keyword id="KW-0408">Iron</keyword>
<keyword id="KW-0479">Metal-binding</keyword>
<evidence type="ECO:0000255" key="1">
    <source>
        <dbReference type="HAMAP-Rule" id="MF_00142"/>
    </source>
</evidence>
<dbReference type="EMBL" id="CP001144">
    <property type="protein sequence ID" value="ACH76319.1"/>
    <property type="molecule type" value="Genomic_DNA"/>
</dbReference>
<dbReference type="RefSeq" id="WP_000999925.1">
    <property type="nucleotide sequence ID" value="NC_011205.1"/>
</dbReference>
<dbReference type="SMR" id="B5FNU2"/>
<dbReference type="KEGG" id="sed:SeD_A4329"/>
<dbReference type="HOGENOM" id="CLU_080880_3_0_6"/>
<dbReference type="Proteomes" id="UP000008322">
    <property type="component" value="Chromosome"/>
</dbReference>
<dbReference type="GO" id="GO:0005829">
    <property type="term" value="C:cytosol"/>
    <property type="evidence" value="ECO:0007669"/>
    <property type="project" value="TreeGrafter"/>
</dbReference>
<dbReference type="GO" id="GO:0008199">
    <property type="term" value="F:ferric iron binding"/>
    <property type="evidence" value="ECO:0007669"/>
    <property type="project" value="InterPro"/>
</dbReference>
<dbReference type="GO" id="GO:0008198">
    <property type="term" value="F:ferrous iron binding"/>
    <property type="evidence" value="ECO:0007669"/>
    <property type="project" value="TreeGrafter"/>
</dbReference>
<dbReference type="GO" id="GO:0016226">
    <property type="term" value="P:iron-sulfur cluster assembly"/>
    <property type="evidence" value="ECO:0007669"/>
    <property type="project" value="UniProtKB-UniRule"/>
</dbReference>
<dbReference type="CDD" id="cd00503">
    <property type="entry name" value="Frataxin"/>
    <property type="match status" value="1"/>
</dbReference>
<dbReference type="FunFam" id="3.30.920.10:FF:000001">
    <property type="entry name" value="Iron-sulfur cluster assembly protein CyaY"/>
    <property type="match status" value="1"/>
</dbReference>
<dbReference type="Gene3D" id="3.30.920.10">
    <property type="entry name" value="Frataxin/CyaY"/>
    <property type="match status" value="1"/>
</dbReference>
<dbReference type="HAMAP" id="MF_00142">
    <property type="entry name" value="CyaY"/>
    <property type="match status" value="1"/>
</dbReference>
<dbReference type="InterPro" id="IPR047584">
    <property type="entry name" value="CyaY"/>
</dbReference>
<dbReference type="InterPro" id="IPR002908">
    <property type="entry name" value="Frataxin/CyaY"/>
</dbReference>
<dbReference type="InterPro" id="IPR036524">
    <property type="entry name" value="Frataxin/CyaY_sf"/>
</dbReference>
<dbReference type="InterPro" id="IPR020895">
    <property type="entry name" value="Frataxin_CS"/>
</dbReference>
<dbReference type="NCBIfam" id="TIGR03421">
    <property type="entry name" value="FeS_CyaY"/>
    <property type="match status" value="1"/>
</dbReference>
<dbReference type="PANTHER" id="PTHR16821">
    <property type="entry name" value="FRATAXIN"/>
    <property type="match status" value="1"/>
</dbReference>
<dbReference type="PANTHER" id="PTHR16821:SF2">
    <property type="entry name" value="FRATAXIN, MITOCHONDRIAL"/>
    <property type="match status" value="1"/>
</dbReference>
<dbReference type="Pfam" id="PF01491">
    <property type="entry name" value="Frataxin_Cyay"/>
    <property type="match status" value="1"/>
</dbReference>
<dbReference type="SMART" id="SM01219">
    <property type="entry name" value="Frataxin_Cyay"/>
    <property type="match status" value="1"/>
</dbReference>
<dbReference type="SUPFAM" id="SSF55387">
    <property type="entry name" value="Frataxin/Nqo15-like"/>
    <property type="match status" value="1"/>
</dbReference>
<dbReference type="PROSITE" id="PS01344">
    <property type="entry name" value="FRATAXIN_1"/>
    <property type="match status" value="1"/>
</dbReference>
<dbReference type="PROSITE" id="PS50810">
    <property type="entry name" value="FRATAXIN_2"/>
    <property type="match status" value="1"/>
</dbReference>
<reference key="1">
    <citation type="journal article" date="2011" name="J. Bacteriol.">
        <title>Comparative genomics of 28 Salmonella enterica isolates: evidence for CRISPR-mediated adaptive sublineage evolution.</title>
        <authorList>
            <person name="Fricke W.F."/>
            <person name="Mammel M.K."/>
            <person name="McDermott P.F."/>
            <person name="Tartera C."/>
            <person name="White D.G."/>
            <person name="Leclerc J.E."/>
            <person name="Ravel J."/>
            <person name="Cebula T.A."/>
        </authorList>
    </citation>
    <scope>NUCLEOTIDE SEQUENCE [LARGE SCALE GENOMIC DNA]</scope>
    <source>
        <strain>CT_02021853</strain>
    </source>
</reference>